<protein>
    <recommendedName>
        <fullName>Isocitrate dehydrogenase [NAD] regulatory subunit A, mitochondrial</fullName>
        <ecNumber>1.1.1.41</ecNumber>
    </recommendedName>
</protein>
<sequence>MFSRKSLSIFSTLRNYSSSTSKIQKVTLIPGDGIGPEISESVKRVFSAVKAPIEWETVVVDANTGISKEVIESISKNKIGLKGPISTPIGTGHQSLNLGLRKTFNLYANIRPCLSIPGHKTRYNNVNTVVVRENTEGEYSGIENQPVKGVAQSIKIITKEASTRIAHYAFQYALANGRKKVTCIHKANIMKQSDGLFVKSCREVSTRYPSIKYEELTIDNNCMQLVLDPNQMDVMVLPNLYGDIVSDLCAGLIGGLGLTPSGNIGENGSAIFEAVHGTAPDIAGKNKANPTALILSSIMMLRHLGHFHEASIIENAVLNTLTEGKVKTGDLGGNSSCSEYTDELVKKITESLNK</sequence>
<organism>
    <name type="scientific">Dictyostelium discoideum</name>
    <name type="common">Social amoeba</name>
    <dbReference type="NCBI Taxonomy" id="44689"/>
    <lineage>
        <taxon>Eukaryota</taxon>
        <taxon>Amoebozoa</taxon>
        <taxon>Evosea</taxon>
        <taxon>Eumycetozoa</taxon>
        <taxon>Dictyostelia</taxon>
        <taxon>Dictyosteliales</taxon>
        <taxon>Dictyosteliaceae</taxon>
        <taxon>Dictyostelium</taxon>
    </lineage>
</organism>
<dbReference type="EC" id="1.1.1.41"/>
<dbReference type="EMBL" id="AAFI02000006">
    <property type="protein sequence ID" value="EAL71802.1"/>
    <property type="molecule type" value="Genomic_DNA"/>
</dbReference>
<dbReference type="RefSeq" id="XP_645630.1">
    <property type="nucleotide sequence ID" value="XM_640538.1"/>
</dbReference>
<dbReference type="SMR" id="Q55BI2"/>
<dbReference type="FunCoup" id="Q55BI2">
    <property type="interactions" value="704"/>
</dbReference>
<dbReference type="STRING" id="44689.Q55BI2"/>
<dbReference type="PaxDb" id="44689-DDB0231288"/>
<dbReference type="EnsemblProtists" id="EAL71802">
    <property type="protein sequence ID" value="EAL71802"/>
    <property type="gene ID" value="DDB_G0271344"/>
</dbReference>
<dbReference type="GeneID" id="8617822"/>
<dbReference type="KEGG" id="ddi:DDB_G0271344"/>
<dbReference type="dictyBase" id="DDB_G0271344">
    <property type="gene designation" value="idhA"/>
</dbReference>
<dbReference type="VEuPathDB" id="AmoebaDB:DDB_G0271344"/>
<dbReference type="eggNOG" id="KOG0785">
    <property type="taxonomic scope" value="Eukaryota"/>
</dbReference>
<dbReference type="HOGENOM" id="CLU_031953_0_0_1"/>
<dbReference type="InParanoid" id="Q55BI2"/>
<dbReference type="OMA" id="VRPCRYY"/>
<dbReference type="PhylomeDB" id="Q55BI2"/>
<dbReference type="Reactome" id="R-DDI-71403">
    <property type="pathway name" value="Citric acid cycle (TCA cycle)"/>
</dbReference>
<dbReference type="PRO" id="PR:Q55BI2"/>
<dbReference type="Proteomes" id="UP000002195">
    <property type="component" value="Chromosome 2"/>
</dbReference>
<dbReference type="GO" id="GO:0005739">
    <property type="term" value="C:mitochondrion"/>
    <property type="evidence" value="ECO:0000250"/>
    <property type="project" value="UniProtKB"/>
</dbReference>
<dbReference type="GO" id="GO:0004449">
    <property type="term" value="F:isocitrate dehydrogenase (NAD+) activity"/>
    <property type="evidence" value="ECO:0000250"/>
    <property type="project" value="UniProtKB"/>
</dbReference>
<dbReference type="GO" id="GO:0000287">
    <property type="term" value="F:magnesium ion binding"/>
    <property type="evidence" value="ECO:0007669"/>
    <property type="project" value="InterPro"/>
</dbReference>
<dbReference type="GO" id="GO:0051287">
    <property type="term" value="F:NAD binding"/>
    <property type="evidence" value="ECO:0007669"/>
    <property type="project" value="InterPro"/>
</dbReference>
<dbReference type="GO" id="GO:0006102">
    <property type="term" value="P:isocitrate metabolic process"/>
    <property type="evidence" value="ECO:0000250"/>
    <property type="project" value="UniProtKB"/>
</dbReference>
<dbReference type="GO" id="GO:0006099">
    <property type="term" value="P:tricarboxylic acid cycle"/>
    <property type="evidence" value="ECO:0000318"/>
    <property type="project" value="GO_Central"/>
</dbReference>
<dbReference type="FunFam" id="3.40.718.10:FF:000003">
    <property type="entry name" value="Isocitrate dehydrogenase [NAD] subunit, mitochondrial"/>
    <property type="match status" value="1"/>
</dbReference>
<dbReference type="Gene3D" id="3.40.718.10">
    <property type="entry name" value="Isopropylmalate Dehydrogenase"/>
    <property type="match status" value="1"/>
</dbReference>
<dbReference type="InterPro" id="IPR019818">
    <property type="entry name" value="IsoCit/isopropylmalate_DH_CS"/>
</dbReference>
<dbReference type="InterPro" id="IPR004434">
    <property type="entry name" value="Isocitrate_DH_NAD"/>
</dbReference>
<dbReference type="InterPro" id="IPR024084">
    <property type="entry name" value="IsoPropMal-DH-like_dom"/>
</dbReference>
<dbReference type="NCBIfam" id="TIGR00175">
    <property type="entry name" value="mito_nad_idh"/>
    <property type="match status" value="1"/>
</dbReference>
<dbReference type="PANTHER" id="PTHR11835">
    <property type="entry name" value="DECARBOXYLATING DEHYDROGENASES-ISOCITRATE, ISOPROPYLMALATE, TARTRATE"/>
    <property type="match status" value="1"/>
</dbReference>
<dbReference type="PANTHER" id="PTHR11835:SF34">
    <property type="entry name" value="ISOCITRATE DEHYDROGENASE [NAD] SUBUNIT ALPHA, MITOCHONDRIAL"/>
    <property type="match status" value="1"/>
</dbReference>
<dbReference type="Pfam" id="PF00180">
    <property type="entry name" value="Iso_dh"/>
    <property type="match status" value="1"/>
</dbReference>
<dbReference type="SMART" id="SM01329">
    <property type="entry name" value="Iso_dh"/>
    <property type="match status" value="1"/>
</dbReference>
<dbReference type="SUPFAM" id="SSF53659">
    <property type="entry name" value="Isocitrate/Isopropylmalate dehydrogenase-like"/>
    <property type="match status" value="1"/>
</dbReference>
<dbReference type="PROSITE" id="PS00470">
    <property type="entry name" value="IDH_IMDH"/>
    <property type="match status" value="1"/>
</dbReference>
<reference key="1">
    <citation type="journal article" date="2002" name="Nature">
        <title>Sequence and analysis of chromosome 2 of Dictyostelium discoideum.</title>
        <authorList>
            <person name="Gloeckner G."/>
            <person name="Eichinger L."/>
            <person name="Szafranski K."/>
            <person name="Pachebat J.A."/>
            <person name="Bankier A.T."/>
            <person name="Dear P.H."/>
            <person name="Lehmann R."/>
            <person name="Baumgart C."/>
            <person name="Parra G."/>
            <person name="Abril J.F."/>
            <person name="Guigo R."/>
            <person name="Kumpf K."/>
            <person name="Tunggal B."/>
            <person name="Cox E.C."/>
            <person name="Quail M.A."/>
            <person name="Platzer M."/>
            <person name="Rosenthal A."/>
            <person name="Noegel A.A."/>
        </authorList>
    </citation>
    <scope>NUCLEOTIDE SEQUENCE [LARGE SCALE GENOMIC DNA]</scope>
    <source>
        <strain>AX4</strain>
    </source>
</reference>
<reference key="2">
    <citation type="journal article" date="2005" name="Nature">
        <title>The genome of the social amoeba Dictyostelium discoideum.</title>
        <authorList>
            <person name="Eichinger L."/>
            <person name="Pachebat J.A."/>
            <person name="Gloeckner G."/>
            <person name="Rajandream M.A."/>
            <person name="Sucgang R."/>
            <person name="Berriman M."/>
            <person name="Song J."/>
            <person name="Olsen R."/>
            <person name="Szafranski K."/>
            <person name="Xu Q."/>
            <person name="Tunggal B."/>
            <person name="Kummerfeld S."/>
            <person name="Madera M."/>
            <person name="Konfortov B.A."/>
            <person name="Rivero F."/>
            <person name="Bankier A.T."/>
            <person name="Lehmann R."/>
            <person name="Hamlin N."/>
            <person name="Davies R."/>
            <person name="Gaudet P."/>
            <person name="Fey P."/>
            <person name="Pilcher K."/>
            <person name="Chen G."/>
            <person name="Saunders D."/>
            <person name="Sodergren E.J."/>
            <person name="Davis P."/>
            <person name="Kerhornou A."/>
            <person name="Nie X."/>
            <person name="Hall N."/>
            <person name="Anjard C."/>
            <person name="Hemphill L."/>
            <person name="Bason N."/>
            <person name="Farbrother P."/>
            <person name="Desany B."/>
            <person name="Just E."/>
            <person name="Morio T."/>
            <person name="Rost R."/>
            <person name="Churcher C.M."/>
            <person name="Cooper J."/>
            <person name="Haydock S."/>
            <person name="van Driessche N."/>
            <person name="Cronin A."/>
            <person name="Goodhead I."/>
            <person name="Muzny D.M."/>
            <person name="Mourier T."/>
            <person name="Pain A."/>
            <person name="Lu M."/>
            <person name="Harper D."/>
            <person name="Lindsay R."/>
            <person name="Hauser H."/>
            <person name="James K.D."/>
            <person name="Quiles M."/>
            <person name="Madan Babu M."/>
            <person name="Saito T."/>
            <person name="Buchrieser C."/>
            <person name="Wardroper A."/>
            <person name="Felder M."/>
            <person name="Thangavelu M."/>
            <person name="Johnson D."/>
            <person name="Knights A."/>
            <person name="Loulseged H."/>
            <person name="Mungall K.L."/>
            <person name="Oliver K."/>
            <person name="Price C."/>
            <person name="Quail M.A."/>
            <person name="Urushihara H."/>
            <person name="Hernandez J."/>
            <person name="Rabbinowitsch E."/>
            <person name="Steffen D."/>
            <person name="Sanders M."/>
            <person name="Ma J."/>
            <person name="Kohara Y."/>
            <person name="Sharp S."/>
            <person name="Simmonds M.N."/>
            <person name="Spiegler S."/>
            <person name="Tivey A."/>
            <person name="Sugano S."/>
            <person name="White B."/>
            <person name="Walker D."/>
            <person name="Woodward J.R."/>
            <person name="Winckler T."/>
            <person name="Tanaka Y."/>
            <person name="Shaulsky G."/>
            <person name="Schleicher M."/>
            <person name="Weinstock G.M."/>
            <person name="Rosenthal A."/>
            <person name="Cox E.C."/>
            <person name="Chisholm R.L."/>
            <person name="Gibbs R.A."/>
            <person name="Loomis W.F."/>
            <person name="Platzer M."/>
            <person name="Kay R.R."/>
            <person name="Williams J.G."/>
            <person name="Dear P.H."/>
            <person name="Noegel A.A."/>
            <person name="Barrell B.G."/>
            <person name="Kuspa A."/>
        </authorList>
    </citation>
    <scope>NUCLEOTIDE SEQUENCE [LARGE SCALE GENOMIC DNA]</scope>
    <source>
        <strain>AX4</strain>
    </source>
</reference>
<evidence type="ECO:0000250" key="1"/>
<evidence type="ECO:0000250" key="2">
    <source>
        <dbReference type="UniProtKB" id="P50213"/>
    </source>
</evidence>
<evidence type="ECO:0000255" key="3"/>
<evidence type="ECO:0000305" key="4"/>
<gene>
    <name type="primary">idhA</name>
    <name type="ORF">DDB_G0271344</name>
</gene>
<proteinExistence type="inferred from homology"/>
<accession>Q55BI2</accession>
<name>IDHA_DICDI</name>
<feature type="transit peptide" description="Mitochondrion" evidence="3">
    <location>
        <begin position="1"/>
        <end status="unknown"/>
    </location>
</feature>
<feature type="chain" id="PRO_0000328018" description="Isocitrate dehydrogenase [NAD] regulatory subunit A, mitochondrial">
    <location>
        <begin status="unknown"/>
        <end position="354"/>
    </location>
</feature>
<feature type="binding site" evidence="1">
    <location>
        <position position="95"/>
    </location>
    <ligand>
        <name>substrate</name>
    </ligand>
</feature>
<feature type="binding site" evidence="1">
    <location>
        <position position="97"/>
    </location>
    <ligand>
        <name>substrate</name>
    </ligand>
</feature>
<feature type="binding site" evidence="1">
    <location>
        <position position="101"/>
    </location>
    <ligand>
        <name>substrate</name>
    </ligand>
</feature>
<feature type="binding site" evidence="1">
    <location>
        <position position="111"/>
    </location>
    <ligand>
        <name>substrate</name>
    </ligand>
</feature>
<feature type="binding site" evidence="1">
    <location>
        <position position="132"/>
    </location>
    <ligand>
        <name>substrate</name>
    </ligand>
</feature>
<feature type="binding site" evidence="2">
    <location>
        <position position="219"/>
    </location>
    <ligand>
        <name>Mg(2+)</name>
        <dbReference type="ChEBI" id="CHEBI:18420"/>
    </ligand>
</feature>
<feature type="binding site" evidence="2">
    <location>
        <position position="243"/>
    </location>
    <ligand>
        <name>Mg(2+)</name>
        <dbReference type="ChEBI" id="CHEBI:18420"/>
    </ligand>
</feature>
<feature type="binding site" evidence="2">
    <location>
        <position position="247"/>
    </location>
    <ligand>
        <name>Mg(2+)</name>
        <dbReference type="ChEBI" id="CHEBI:18420"/>
    </ligand>
</feature>
<feature type="binding site" evidence="1">
    <location>
        <begin position="276"/>
        <end position="282"/>
    </location>
    <ligand>
        <name>NADP(+)</name>
        <dbReference type="ChEBI" id="CHEBI:58349"/>
    </ligand>
</feature>
<feature type="binding site" evidence="1">
    <location>
        <position position="289"/>
    </location>
    <ligand>
        <name>NADP(+)</name>
        <dbReference type="ChEBI" id="CHEBI:58349"/>
    </ligand>
</feature>
<feature type="site" description="Critical for catalysis" evidence="1">
    <location>
        <position position="139"/>
    </location>
</feature>
<feature type="site" description="Critical for catalysis" evidence="1">
    <location>
        <position position="186"/>
    </location>
</feature>
<keyword id="KW-0460">Magnesium</keyword>
<keyword id="KW-0464">Manganese</keyword>
<keyword id="KW-0479">Metal-binding</keyword>
<keyword id="KW-0496">Mitochondrion</keyword>
<keyword id="KW-0520">NAD</keyword>
<keyword id="KW-0560">Oxidoreductase</keyword>
<keyword id="KW-1185">Reference proteome</keyword>
<keyword id="KW-0809">Transit peptide</keyword>
<keyword id="KW-0816">Tricarboxylic acid cycle</keyword>
<comment type="function">
    <text evidence="1">Performs an essential role in the oxidative function of the citric acid cycle.</text>
</comment>
<comment type="catalytic activity">
    <reaction>
        <text>D-threo-isocitrate + NAD(+) = 2-oxoglutarate + CO2 + NADH</text>
        <dbReference type="Rhea" id="RHEA:23632"/>
        <dbReference type="ChEBI" id="CHEBI:15562"/>
        <dbReference type="ChEBI" id="CHEBI:16526"/>
        <dbReference type="ChEBI" id="CHEBI:16810"/>
        <dbReference type="ChEBI" id="CHEBI:57540"/>
        <dbReference type="ChEBI" id="CHEBI:57945"/>
        <dbReference type="EC" id="1.1.1.41"/>
    </reaction>
</comment>
<comment type="cofactor">
    <cofactor evidence="1">
        <name>Mg(2+)</name>
        <dbReference type="ChEBI" id="CHEBI:18420"/>
    </cofactor>
    <cofactor evidence="1">
        <name>Mn(2+)</name>
        <dbReference type="ChEBI" id="CHEBI:29035"/>
    </cofactor>
    <text evidence="1">Binds 1 Mg(2+) or Mn(2+) ion per subunit.</text>
</comment>
<comment type="subunit">
    <text evidence="1">Heterooligomer of catalytic and regulatory subunits.</text>
</comment>
<comment type="subcellular location">
    <subcellularLocation>
        <location evidence="1">Mitochondrion</location>
    </subcellularLocation>
</comment>
<comment type="similarity">
    <text evidence="4">Belongs to the isocitrate and isopropylmalate dehydrogenases family.</text>
</comment>